<accession>Q68CK6</accession>
<accession>Q86YT1</accession>
<keyword id="KW-0067">ATP-binding</keyword>
<keyword id="KW-0903">Direct protein sequencing</keyword>
<keyword id="KW-0276">Fatty acid metabolism</keyword>
<keyword id="KW-0436">Ligase</keyword>
<keyword id="KW-0443">Lipid metabolism</keyword>
<keyword id="KW-0460">Magnesium</keyword>
<keyword id="KW-0479">Metal-binding</keyword>
<keyword id="KW-0496">Mitochondrion</keyword>
<keyword id="KW-0547">Nucleotide-binding</keyword>
<keyword id="KW-0597">Phosphoprotein</keyword>
<keyword id="KW-1267">Proteomics identification</keyword>
<keyword id="KW-1185">Reference proteome</keyword>
<keyword id="KW-0809">Transit peptide</keyword>
<reference key="1">
    <citation type="journal article" date="2003" name="J. Biochem. Mol. Toxicol.">
        <title>Isolation, sequencing, and expression of a cDNA for the HXM-A form of xenobiotic/medium-chain fatty acid:CoA ligase from human liver mitochondria.</title>
        <authorList>
            <person name="Vessey D.A."/>
            <person name="Lau E."/>
            <person name="Kelley M."/>
            <person name="Warren R.S."/>
        </authorList>
    </citation>
    <scope>NUCLEOTIDE SEQUENCE [MRNA]</scope>
    <scope>PROTEIN SEQUENCE OF 152-163 AND 483-491</scope>
    <scope>FUNCTION</scope>
    <scope>SUBCELLULAR LOCATION</scope>
    <scope>SUBUNIT</scope>
    <scope>CATALYTIC ACTIVITY</scope>
    <source>
        <tissue>Liver</tissue>
    </source>
</reference>
<reference key="2">
    <citation type="journal article" date="2004" name="Oncogene">
        <title>Expression profiling and differential screening between hepatoblastomas and the corresponding normal livers: identification of high expression of the PLK1 oncogene as a poor-prognostic indicator of hepatoblastomas.</title>
        <authorList>
            <person name="Yamada S."/>
            <person name="Ohira M."/>
            <person name="Horie H."/>
            <person name="Ando K."/>
            <person name="Takayasu H."/>
            <person name="Suzuki Y."/>
            <person name="Sugano S."/>
            <person name="Hirata T."/>
            <person name="Goto T."/>
            <person name="Matsunaga T."/>
            <person name="Hiyama E."/>
            <person name="Hayashi Y."/>
            <person name="Ando H."/>
            <person name="Suita S."/>
            <person name="Kaneko M."/>
            <person name="Sasaki F."/>
            <person name="Hashizume K."/>
            <person name="Ohnuma N."/>
            <person name="Nakagawara A."/>
        </authorList>
    </citation>
    <scope>NUCLEOTIDE SEQUENCE [LARGE SCALE MRNA]</scope>
    <source>
        <tissue>Liver</tissue>
    </source>
</reference>
<reference key="3">
    <citation type="journal article" date="2004" name="Nature">
        <title>The sequence and analysis of duplication-rich human chromosome 16.</title>
        <authorList>
            <person name="Martin J."/>
            <person name="Han C."/>
            <person name="Gordon L.A."/>
            <person name="Terry A."/>
            <person name="Prabhakar S."/>
            <person name="She X."/>
            <person name="Xie G."/>
            <person name="Hellsten U."/>
            <person name="Chan Y.M."/>
            <person name="Altherr M."/>
            <person name="Couronne O."/>
            <person name="Aerts A."/>
            <person name="Bajorek E."/>
            <person name="Black S."/>
            <person name="Blumer H."/>
            <person name="Branscomb E."/>
            <person name="Brown N.C."/>
            <person name="Bruno W.J."/>
            <person name="Buckingham J.M."/>
            <person name="Callen D.F."/>
            <person name="Campbell C.S."/>
            <person name="Campbell M.L."/>
            <person name="Campbell E.W."/>
            <person name="Caoile C."/>
            <person name="Challacombe J.F."/>
            <person name="Chasteen L.A."/>
            <person name="Chertkov O."/>
            <person name="Chi H.C."/>
            <person name="Christensen M."/>
            <person name="Clark L.M."/>
            <person name="Cohn J.D."/>
            <person name="Denys M."/>
            <person name="Detter J.C."/>
            <person name="Dickson M."/>
            <person name="Dimitrijevic-Bussod M."/>
            <person name="Escobar J."/>
            <person name="Fawcett J.J."/>
            <person name="Flowers D."/>
            <person name="Fotopulos D."/>
            <person name="Glavina T."/>
            <person name="Gomez M."/>
            <person name="Gonzales E."/>
            <person name="Goodstein D."/>
            <person name="Goodwin L.A."/>
            <person name="Grady D.L."/>
            <person name="Grigoriev I."/>
            <person name="Groza M."/>
            <person name="Hammon N."/>
            <person name="Hawkins T."/>
            <person name="Haydu L."/>
            <person name="Hildebrand C.E."/>
            <person name="Huang W."/>
            <person name="Israni S."/>
            <person name="Jett J."/>
            <person name="Jewett P.B."/>
            <person name="Kadner K."/>
            <person name="Kimball H."/>
            <person name="Kobayashi A."/>
            <person name="Krawczyk M.-C."/>
            <person name="Leyba T."/>
            <person name="Longmire J.L."/>
            <person name="Lopez F."/>
            <person name="Lou Y."/>
            <person name="Lowry S."/>
            <person name="Ludeman T."/>
            <person name="Manohar C.F."/>
            <person name="Mark G.A."/>
            <person name="McMurray K.L."/>
            <person name="Meincke L.J."/>
            <person name="Morgan J."/>
            <person name="Moyzis R.K."/>
            <person name="Mundt M.O."/>
            <person name="Munk A.C."/>
            <person name="Nandkeshwar R.D."/>
            <person name="Pitluck S."/>
            <person name="Pollard M."/>
            <person name="Predki P."/>
            <person name="Parson-Quintana B."/>
            <person name="Ramirez L."/>
            <person name="Rash S."/>
            <person name="Retterer J."/>
            <person name="Ricke D.O."/>
            <person name="Robinson D.L."/>
            <person name="Rodriguez A."/>
            <person name="Salamov A."/>
            <person name="Saunders E.H."/>
            <person name="Scott D."/>
            <person name="Shough T."/>
            <person name="Stallings R.L."/>
            <person name="Stalvey M."/>
            <person name="Sutherland R.D."/>
            <person name="Tapia R."/>
            <person name="Tesmer J.G."/>
            <person name="Thayer N."/>
            <person name="Thompson L.S."/>
            <person name="Tice H."/>
            <person name="Torney D.C."/>
            <person name="Tran-Gyamfi M."/>
            <person name="Tsai M."/>
            <person name="Ulanovsky L.E."/>
            <person name="Ustaszewska A."/>
            <person name="Vo N."/>
            <person name="White P.S."/>
            <person name="Williams A.L."/>
            <person name="Wills P.L."/>
            <person name="Wu J.-R."/>
            <person name="Wu K."/>
            <person name="Yang J."/>
            <person name="DeJong P."/>
            <person name="Bruce D."/>
            <person name="Doggett N.A."/>
            <person name="Deaven L."/>
            <person name="Schmutz J."/>
            <person name="Grimwood J."/>
            <person name="Richardson P."/>
            <person name="Rokhsar D.S."/>
            <person name="Eichler E.E."/>
            <person name="Gilna P."/>
            <person name="Lucas S.M."/>
            <person name="Myers R.M."/>
            <person name="Rubin E.M."/>
            <person name="Pennacchio L.A."/>
        </authorList>
    </citation>
    <scope>NUCLEOTIDE SEQUENCE [LARGE SCALE GENOMIC DNA]</scope>
</reference>
<reference key="4">
    <citation type="journal article" date="1999" name="Biochim. Biophys. Acta">
        <title>Characterization of the CoA ligases of human liver mitochondria catalyzing the activation of short- and medium-chain fatty acids and xenobiotic carboxylic acids.</title>
        <authorList>
            <person name="Vessey D.A."/>
            <person name="Kelley M."/>
            <person name="Warren R.S."/>
        </authorList>
    </citation>
    <scope>FUNCTION</scope>
    <scope>SUBCELLULAR LOCATION</scope>
    <scope>CATALYTIC ACTIVITY</scope>
    <scope>COFACTOR</scope>
    <scope>TISSUE SPECIFICITY</scope>
    <scope>ACTIVITY REGULATION</scope>
    <scope>BIOPHYSICOCHEMICAL PROPERTIES</scope>
</reference>
<reference key="5">
    <citation type="journal article" date="2009" name="Biochem. Genet.">
        <title>Comparative analyses of disease risk genes belonging to the acyl-CoA synthetase medium-chain (ACSM) family in human liver and cell lines.</title>
        <authorList>
            <person name="Boomgaarden I."/>
            <person name="Vock C."/>
            <person name="Klapper M."/>
            <person name="Doering F."/>
        </authorList>
    </citation>
    <scope>SUBCELLULAR LOCATION</scope>
    <scope>TISSUE SPECIFICITY</scope>
</reference>
<reference key="6">
    <citation type="journal article" date="2014" name="J. Proteomics">
        <title>An enzyme assisted RP-RPLC approach for in-depth analysis of human liver phosphoproteome.</title>
        <authorList>
            <person name="Bian Y."/>
            <person name="Song C."/>
            <person name="Cheng K."/>
            <person name="Dong M."/>
            <person name="Wang F."/>
            <person name="Huang J."/>
            <person name="Sun D."/>
            <person name="Wang L."/>
            <person name="Ye M."/>
            <person name="Zou H."/>
        </authorList>
    </citation>
    <scope>PHOSPHORYLATION [LARGE SCALE ANALYSIS] AT SER-513</scope>
    <scope>IDENTIFICATION BY MASS SPECTROMETRY [LARGE SCALE ANALYSIS]</scope>
    <source>
        <tissue>Liver</tissue>
    </source>
</reference>
<reference key="7">
    <citation type="journal article" date="2016" name="Expert Opin. Drug Metab. Toxicol.">
        <title>Xenobiotic/medium chain fatty acid: CoA ligase - a critical review on its role in fatty acid metabolism and the detoxification of benzoic acid and aspirin.</title>
        <authorList>
            <person name="van der Sluis R."/>
            <person name="Erasmus E."/>
        </authorList>
    </citation>
    <scope>REVIEW</scope>
</reference>
<sequence>MHWLRKVQGLCTLWGTQMSSRTLYINSRQLVSLQWGHQEVPAKFNFASDVLDHWADMEKAGKRLPSPALWWVNGKGKELMWNFRELSENSQQAANILSGACGLQRGDRVAVMLPRVPEWWLVILGCIRAGLIFMPGTIQMKSTDILYRLQMSKAKAIVAGDEVIQEVDTVASECPSLRIKLLVSEKSCDGWLNFKKLLNEASTTHHCVETGSQEASAIYFTSGTSGLPKMAEHSYSSLGLKAKMDAGWTGLQASDIMWTISDTGWILNILGSLLESWTLGACTFVHLLPKFDPLVILKTLSSYPIKSMMGAPIVYRMLLQQDLSSYKFPHLQNCLAGGESLLPETLENWRAQTGLDIREFYGQTETGLTCMVSKTMKIKPGYMGTAASCYDVQVIDDKGNVLPPGTEGDIGIRVKPIRPIGIFSGYVENPDKTAANIRGDFWLLGDRGIKDEDGYFQFMGRADDIINSSGYRIGPSEVENALMKHPAVVETAVISSPDPVRGEVVKAFVILASQFLSHDPEQLTKELQQHVKSVTAPYKYPRKIEFVLNLPKTVTGKIQRTKLRDKEWKMSGKARAQ</sequence>
<proteinExistence type="evidence at protein level"/>
<gene>
    <name type="primary">ACSM2B</name>
    <name type="synonym">ACSM2</name>
    <name type="ORF">HYST1046</name>
</gene>
<dbReference type="EC" id="6.2.1.2" evidence="3"/>
<dbReference type="EC" id="6.2.1.25" evidence="3 4"/>
<dbReference type="EMBL" id="AY160217">
    <property type="protein sequence ID" value="AAO17576.1"/>
    <property type="molecule type" value="mRNA"/>
</dbReference>
<dbReference type="EMBL" id="AB073604">
    <property type="protein sequence ID" value="BAD38642.1"/>
    <property type="molecule type" value="mRNA"/>
</dbReference>
<dbReference type="EMBL" id="AC141053">
    <property type="status" value="NOT_ANNOTATED_CDS"/>
    <property type="molecule type" value="Genomic_DNA"/>
</dbReference>
<dbReference type="EMBL" id="AC141273">
    <property type="status" value="NOT_ANNOTATED_CDS"/>
    <property type="molecule type" value="Genomic_DNA"/>
</dbReference>
<dbReference type="CCDS" id="CCDS10586.1"/>
<dbReference type="RefSeq" id="NP_001098539.1">
    <property type="nucleotide sequence ID" value="NM_001105069.2"/>
</dbReference>
<dbReference type="RefSeq" id="NP_872423.3">
    <property type="nucleotide sequence ID" value="NM_182617.3"/>
</dbReference>
<dbReference type="SMR" id="Q68CK6"/>
<dbReference type="BioGRID" id="131510">
    <property type="interactions" value="5"/>
</dbReference>
<dbReference type="FunCoup" id="Q68CK6">
    <property type="interactions" value="27"/>
</dbReference>
<dbReference type="IntAct" id="Q68CK6">
    <property type="interactions" value="4"/>
</dbReference>
<dbReference type="STRING" id="9606.ENSP00000327453"/>
<dbReference type="SwissLipids" id="SLP:000001827"/>
<dbReference type="iPTMnet" id="Q68CK6"/>
<dbReference type="PhosphoSitePlus" id="Q68CK6"/>
<dbReference type="BioMuta" id="ACSM2B"/>
<dbReference type="DMDM" id="296434397"/>
<dbReference type="jPOST" id="Q68CK6"/>
<dbReference type="MassIVE" id="Q68CK6"/>
<dbReference type="PaxDb" id="9606-ENSP00000327453"/>
<dbReference type="PeptideAtlas" id="Q68CK6"/>
<dbReference type="ProteomicsDB" id="66005"/>
<dbReference type="Antibodypedia" id="55971">
    <property type="antibodies" value="3 antibodies from 3 providers"/>
</dbReference>
<dbReference type="DNASU" id="348158"/>
<dbReference type="Ensembl" id="ENST00000329697.10">
    <property type="protein sequence ID" value="ENSP00000327453.6"/>
    <property type="gene ID" value="ENSG00000066813.14"/>
</dbReference>
<dbReference type="Ensembl" id="ENST00000414188.6">
    <property type="protein sequence ID" value="ENSP00000390378.3"/>
    <property type="gene ID" value="ENSG00000066813.14"/>
</dbReference>
<dbReference type="Ensembl" id="ENST00000565232.5">
    <property type="protein sequence ID" value="ENSP00000454995.1"/>
    <property type="gene ID" value="ENSG00000066813.14"/>
</dbReference>
<dbReference type="Ensembl" id="ENST00000567001.5">
    <property type="protein sequence ID" value="ENSP00000456378.1"/>
    <property type="gene ID" value="ENSG00000066813.14"/>
</dbReference>
<dbReference type="GeneID" id="348158"/>
<dbReference type="KEGG" id="hsa:348158"/>
<dbReference type="MANE-Select" id="ENST00000329697.10">
    <property type="protein sequence ID" value="ENSP00000327453.6"/>
    <property type="RefSeq nucleotide sequence ID" value="NM_001105069.2"/>
    <property type="RefSeq protein sequence ID" value="NP_001098539.1"/>
</dbReference>
<dbReference type="UCSC" id="uc002dhj.5">
    <property type="organism name" value="human"/>
</dbReference>
<dbReference type="AGR" id="HGNC:30931"/>
<dbReference type="CTD" id="348158"/>
<dbReference type="DisGeNET" id="348158"/>
<dbReference type="GeneCards" id="ACSM2B"/>
<dbReference type="HGNC" id="HGNC:30931">
    <property type="gene designation" value="ACSM2B"/>
</dbReference>
<dbReference type="HPA" id="ENSG00000066813">
    <property type="expression patterns" value="Group enriched (kidney, liver)"/>
</dbReference>
<dbReference type="MIM" id="614359">
    <property type="type" value="gene"/>
</dbReference>
<dbReference type="neXtProt" id="NX_Q68CK6"/>
<dbReference type="OpenTargets" id="ENSG00000066813"/>
<dbReference type="PharmGKB" id="PA162375437"/>
<dbReference type="VEuPathDB" id="HostDB:ENSG00000066813"/>
<dbReference type="eggNOG" id="KOG1175">
    <property type="taxonomic scope" value="Eukaryota"/>
</dbReference>
<dbReference type="GeneTree" id="ENSGT00940000164294"/>
<dbReference type="InParanoid" id="Q68CK6"/>
<dbReference type="OMA" id="GPVGCRY"/>
<dbReference type="OrthoDB" id="6614653at2759"/>
<dbReference type="PAN-GO" id="Q68CK6">
    <property type="GO annotations" value="5 GO annotations based on evolutionary models"/>
</dbReference>
<dbReference type="PhylomeDB" id="Q68CK6"/>
<dbReference type="TreeFam" id="TF354264"/>
<dbReference type="PathwayCommons" id="Q68CK6"/>
<dbReference type="Reactome" id="R-HSA-177128">
    <property type="pathway name" value="Conjugation of salicylate with glycine"/>
</dbReference>
<dbReference type="Reactome" id="R-HSA-177135">
    <property type="pathway name" value="Conjugation of benzoate with glycine"/>
</dbReference>
<dbReference type="Reactome" id="R-HSA-177162">
    <property type="pathway name" value="Conjugation of phenylacetate with glutamine"/>
</dbReference>
<dbReference type="Reactome" id="R-HSA-9749641">
    <property type="pathway name" value="Aspirin ADME"/>
</dbReference>
<dbReference type="SABIO-RK" id="Q68CK6"/>
<dbReference type="SignaLink" id="Q68CK6"/>
<dbReference type="BioGRID-ORCS" id="348158">
    <property type="hits" value="14 hits in 1147 CRISPR screens"/>
</dbReference>
<dbReference type="ChiTaRS" id="ACSM2B">
    <property type="organism name" value="human"/>
</dbReference>
<dbReference type="GeneWiki" id="ACSM2B"/>
<dbReference type="GenomeRNAi" id="348158"/>
<dbReference type="Pharos" id="Q68CK6">
    <property type="development level" value="Tdark"/>
</dbReference>
<dbReference type="PRO" id="PR:Q68CK6"/>
<dbReference type="Proteomes" id="UP000005640">
    <property type="component" value="Chromosome 16"/>
</dbReference>
<dbReference type="RNAct" id="Q68CK6">
    <property type="molecule type" value="protein"/>
</dbReference>
<dbReference type="Bgee" id="ENSG00000066813">
    <property type="expression patterns" value="Expressed in right lobe of liver and 104 other cell types or tissues"/>
</dbReference>
<dbReference type="ExpressionAtlas" id="Q68CK6">
    <property type="expression patterns" value="baseline and differential"/>
</dbReference>
<dbReference type="GO" id="GO:0005759">
    <property type="term" value="C:mitochondrial matrix"/>
    <property type="evidence" value="ECO:0000318"/>
    <property type="project" value="GO_Central"/>
</dbReference>
<dbReference type="GO" id="GO:0005739">
    <property type="term" value="C:mitochondrion"/>
    <property type="evidence" value="ECO:0000314"/>
    <property type="project" value="UniProtKB"/>
</dbReference>
<dbReference type="GO" id="GO:0005524">
    <property type="term" value="F:ATP binding"/>
    <property type="evidence" value="ECO:0007669"/>
    <property type="project" value="UniProtKB-KW"/>
</dbReference>
<dbReference type="GO" id="GO:0018858">
    <property type="term" value="F:benzoate-CoA ligase activity"/>
    <property type="evidence" value="ECO:0000314"/>
    <property type="project" value="UniProtKB"/>
</dbReference>
<dbReference type="GO" id="GO:0016405">
    <property type="term" value="F:CoA-ligase activity"/>
    <property type="evidence" value="ECO:0000304"/>
    <property type="project" value="Reactome"/>
</dbReference>
<dbReference type="GO" id="GO:0102391">
    <property type="term" value="F:decanoate-CoA ligase activity"/>
    <property type="evidence" value="ECO:0007669"/>
    <property type="project" value="RHEA"/>
</dbReference>
<dbReference type="GO" id="GO:0015645">
    <property type="term" value="F:fatty acid ligase activity"/>
    <property type="evidence" value="ECO:0000318"/>
    <property type="project" value="GO_Central"/>
</dbReference>
<dbReference type="GO" id="GO:0004321">
    <property type="term" value="F:fatty-acyl-CoA synthase activity"/>
    <property type="evidence" value="ECO:0000318"/>
    <property type="project" value="GO_Central"/>
</dbReference>
<dbReference type="GO" id="GO:0046872">
    <property type="term" value="F:metal ion binding"/>
    <property type="evidence" value="ECO:0007669"/>
    <property type="project" value="UniProtKB-KW"/>
</dbReference>
<dbReference type="GO" id="GO:0006637">
    <property type="term" value="P:acyl-CoA metabolic process"/>
    <property type="evidence" value="ECO:0000318"/>
    <property type="project" value="GO_Central"/>
</dbReference>
<dbReference type="GO" id="GO:0006633">
    <property type="term" value="P:fatty acid biosynthetic process"/>
    <property type="evidence" value="ECO:0000318"/>
    <property type="project" value="GO_Central"/>
</dbReference>
<dbReference type="GO" id="GO:0006805">
    <property type="term" value="P:xenobiotic metabolic process"/>
    <property type="evidence" value="ECO:0000304"/>
    <property type="project" value="Reactome"/>
</dbReference>
<dbReference type="FunFam" id="3.40.50.12780:FF:000007">
    <property type="entry name" value="Acyl-coenzyme A synthetase ACSM2A, mitochondrial"/>
    <property type="match status" value="1"/>
</dbReference>
<dbReference type="FunFam" id="3.30.300.30:FF:000005">
    <property type="entry name" value="Acyl-coenzyme A synthetase ACSM5, mitochondrial"/>
    <property type="match status" value="1"/>
</dbReference>
<dbReference type="Gene3D" id="3.30.300.30">
    <property type="match status" value="1"/>
</dbReference>
<dbReference type="Gene3D" id="3.40.50.12780">
    <property type="entry name" value="N-terminal domain of ligase-like"/>
    <property type="match status" value="1"/>
</dbReference>
<dbReference type="InterPro" id="IPR025110">
    <property type="entry name" value="AMP-bd_C"/>
</dbReference>
<dbReference type="InterPro" id="IPR045851">
    <property type="entry name" value="AMP-bd_C_sf"/>
</dbReference>
<dbReference type="InterPro" id="IPR020845">
    <property type="entry name" value="AMP-binding_CS"/>
</dbReference>
<dbReference type="InterPro" id="IPR000873">
    <property type="entry name" value="AMP-dep_synth/lig_dom"/>
</dbReference>
<dbReference type="InterPro" id="IPR042099">
    <property type="entry name" value="ANL_N_sf"/>
</dbReference>
<dbReference type="InterPro" id="IPR051087">
    <property type="entry name" value="Mitochondrial_ACSM"/>
</dbReference>
<dbReference type="PANTHER" id="PTHR43605">
    <property type="entry name" value="ACYL-COENZYME A SYNTHETASE"/>
    <property type="match status" value="1"/>
</dbReference>
<dbReference type="PANTHER" id="PTHR43605:SF3">
    <property type="entry name" value="ACYL-COENZYME A SYNTHETASE ACSM2B, MITOCHONDRIAL"/>
    <property type="match status" value="1"/>
</dbReference>
<dbReference type="Pfam" id="PF00501">
    <property type="entry name" value="AMP-binding"/>
    <property type="match status" value="1"/>
</dbReference>
<dbReference type="Pfam" id="PF13193">
    <property type="entry name" value="AMP-binding_C"/>
    <property type="match status" value="1"/>
</dbReference>
<dbReference type="SUPFAM" id="SSF56801">
    <property type="entry name" value="Acetyl-CoA synthetase-like"/>
    <property type="match status" value="1"/>
</dbReference>
<dbReference type="PROSITE" id="PS00455">
    <property type="entry name" value="AMP_BINDING"/>
    <property type="match status" value="1"/>
</dbReference>
<protein>
    <recommendedName>
        <fullName>Acyl-coenzyme A synthetase ACSM2B, mitochondrial</fullName>
        <ecNumber evidence="3">6.2.1.2</ecNumber>
    </recommendedName>
    <alternativeName>
        <fullName>Acyl-CoA synthetase medium-chain family member 2B</fullName>
    </alternativeName>
    <alternativeName>
        <fullName>Benzoate--CoA ligase</fullName>
        <ecNumber evidence="3 4">6.2.1.25</ecNumber>
    </alternativeName>
    <alternativeName>
        <fullName>Butyrate--CoA ligase 2B</fullName>
    </alternativeName>
    <alternativeName>
        <fullName>Butyryl-coenzyme A synthetase 2B</fullName>
    </alternativeName>
    <alternativeName>
        <fullName>Middle-chain acyl-CoA synthetase 2B</fullName>
    </alternativeName>
    <alternativeName>
        <fullName evidence="6">Xenobiotic/medium-chain fatty acid-CoA ligase HXM-A</fullName>
    </alternativeName>
</protein>
<organism>
    <name type="scientific">Homo sapiens</name>
    <name type="common">Human</name>
    <dbReference type="NCBI Taxonomy" id="9606"/>
    <lineage>
        <taxon>Eukaryota</taxon>
        <taxon>Metazoa</taxon>
        <taxon>Chordata</taxon>
        <taxon>Craniata</taxon>
        <taxon>Vertebrata</taxon>
        <taxon>Euteleostomi</taxon>
        <taxon>Mammalia</taxon>
        <taxon>Eutheria</taxon>
        <taxon>Euarchontoglires</taxon>
        <taxon>Primates</taxon>
        <taxon>Haplorrhini</taxon>
        <taxon>Catarrhini</taxon>
        <taxon>Hominidae</taxon>
        <taxon>Homo</taxon>
    </lineage>
</organism>
<name>ACS2B_HUMAN</name>
<comment type="function">
    <text evidence="3 4">Catalyzes the activation of fatty acids by CoA to produce an acyl-CoA, the first step in fatty acid metabolism (PubMed:10434065, PubMed:12616642). Capable of activating medium-chain fatty acids (e.g. butyric (C4) to decanoic (C10) acids), and certain carboxylate-containing xenobiotics, e.g. benzoate (PubMed:10434065, PubMed:12616642).</text>
</comment>
<comment type="catalytic activity">
    <reaction evidence="3">
        <text>a medium-chain fatty acid + ATP + CoA = a medium-chain fatty acyl-CoA + AMP + diphosphate</text>
        <dbReference type="Rhea" id="RHEA:48340"/>
        <dbReference type="ChEBI" id="CHEBI:30616"/>
        <dbReference type="ChEBI" id="CHEBI:33019"/>
        <dbReference type="ChEBI" id="CHEBI:57287"/>
        <dbReference type="ChEBI" id="CHEBI:59558"/>
        <dbReference type="ChEBI" id="CHEBI:90546"/>
        <dbReference type="ChEBI" id="CHEBI:456215"/>
        <dbReference type="EC" id="6.2.1.2"/>
    </reaction>
    <physiologicalReaction direction="left-to-right" evidence="8">
        <dbReference type="Rhea" id="RHEA:48341"/>
    </physiologicalReaction>
</comment>
<comment type="catalytic activity">
    <reaction evidence="3 4">
        <text>benzoate + ATP + CoA = benzoyl-CoA + AMP + diphosphate</text>
        <dbReference type="Rhea" id="RHEA:10132"/>
        <dbReference type="ChEBI" id="CHEBI:16150"/>
        <dbReference type="ChEBI" id="CHEBI:30616"/>
        <dbReference type="ChEBI" id="CHEBI:33019"/>
        <dbReference type="ChEBI" id="CHEBI:57287"/>
        <dbReference type="ChEBI" id="CHEBI:57369"/>
        <dbReference type="ChEBI" id="CHEBI:456215"/>
        <dbReference type="EC" id="6.2.1.25"/>
    </reaction>
    <physiologicalReaction direction="left-to-right" evidence="8 9">
        <dbReference type="Rhea" id="RHEA:10133"/>
    </physiologicalReaction>
</comment>
<comment type="catalytic activity">
    <reaction evidence="3">
        <text>hexanoate + ATP + CoA = hexanoyl-CoA + AMP + diphosphate</text>
        <dbReference type="Rhea" id="RHEA:43740"/>
        <dbReference type="ChEBI" id="CHEBI:17120"/>
        <dbReference type="ChEBI" id="CHEBI:30616"/>
        <dbReference type="ChEBI" id="CHEBI:33019"/>
        <dbReference type="ChEBI" id="CHEBI:57287"/>
        <dbReference type="ChEBI" id="CHEBI:62620"/>
        <dbReference type="ChEBI" id="CHEBI:456215"/>
    </reaction>
    <physiologicalReaction direction="left-to-right" evidence="8">
        <dbReference type="Rhea" id="RHEA:43741"/>
    </physiologicalReaction>
</comment>
<comment type="catalytic activity">
    <reaction evidence="3">
        <text>butanoate + ATP + CoA = butanoyl-CoA + AMP + diphosphate</text>
        <dbReference type="Rhea" id="RHEA:46172"/>
        <dbReference type="ChEBI" id="CHEBI:17968"/>
        <dbReference type="ChEBI" id="CHEBI:30616"/>
        <dbReference type="ChEBI" id="CHEBI:33019"/>
        <dbReference type="ChEBI" id="CHEBI:57287"/>
        <dbReference type="ChEBI" id="CHEBI:57371"/>
        <dbReference type="ChEBI" id="CHEBI:456215"/>
    </reaction>
    <physiologicalReaction direction="left-to-right" evidence="8">
        <dbReference type="Rhea" id="RHEA:46173"/>
    </physiologicalReaction>
</comment>
<comment type="catalytic activity">
    <reaction evidence="3">
        <text>octanoate + ATP + CoA = octanoyl-CoA + AMP + diphosphate</text>
        <dbReference type="Rhea" id="RHEA:33631"/>
        <dbReference type="ChEBI" id="CHEBI:25646"/>
        <dbReference type="ChEBI" id="CHEBI:30616"/>
        <dbReference type="ChEBI" id="CHEBI:33019"/>
        <dbReference type="ChEBI" id="CHEBI:57287"/>
        <dbReference type="ChEBI" id="CHEBI:57386"/>
        <dbReference type="ChEBI" id="CHEBI:456215"/>
    </reaction>
    <physiologicalReaction direction="left-to-right" evidence="8">
        <dbReference type="Rhea" id="RHEA:33632"/>
    </physiologicalReaction>
</comment>
<comment type="catalytic activity">
    <reaction evidence="3">
        <text>decanoate + ATP + CoA = decanoyl-CoA + AMP + diphosphate</text>
        <dbReference type="Rhea" id="RHEA:33627"/>
        <dbReference type="ChEBI" id="CHEBI:27689"/>
        <dbReference type="ChEBI" id="CHEBI:30616"/>
        <dbReference type="ChEBI" id="CHEBI:33019"/>
        <dbReference type="ChEBI" id="CHEBI:57287"/>
        <dbReference type="ChEBI" id="CHEBI:61430"/>
        <dbReference type="ChEBI" id="CHEBI:456215"/>
    </reaction>
    <physiologicalReaction direction="left-to-right" evidence="8">
        <dbReference type="Rhea" id="RHEA:33628"/>
    </physiologicalReaction>
</comment>
<comment type="cofactor">
    <cofactor evidence="3">
        <name>Mg(2+)</name>
        <dbReference type="ChEBI" id="CHEBI:18420"/>
    </cofactor>
    <cofactor evidence="3">
        <name>Mn(2+)</name>
        <dbReference type="ChEBI" id="CHEBI:29035"/>
    </cofactor>
</comment>
<comment type="activity regulation">
    <text evidence="3">Activated by monovalent cations, such as potassium, rubidium or ammonium.</text>
</comment>
<comment type="biophysicochemical properties">
    <kinetics>
        <KM evidence="3">13 uM for benzoate</KM>
        <KM evidence="3">800 uM for butyrate</KM>
        <KM evidence="3">110 uM for decanoate</KM>
        <KM evidence="3">74 uM for hexanoate</KM>
        <KM evidence="3">60 uM for laurate</KM>
        <KM evidence="3">160 uM for phenylacetate</KM>
        <KM evidence="3">7.4 uM for salicylate</KM>
        <Vmax evidence="3">103.0 nmol/min/mg enzyme for benzoate</Vmax>
        <Vmax evidence="3">27.0 nmol/min/mg enzyme for butyrate</Vmax>
        <Vmax evidence="3">15.0 nmol/min/mg enzyme for decanoate</Vmax>
        <Vmax evidence="3">88.0 nmol/min/mg enzyme for hexanoate</Vmax>
        <Vmax evidence="3">0.2 nmol/min/mg enzyme for laurate</Vmax>
        <Vmax evidence="3">29.0 nmol/min/mg enzyme for phenylacetate</Vmax>
        <Vmax evidence="3">0.7 nmol/min/mg enzyme for salicylate</Vmax>
    </kinetics>
    <phDependence>
        <text evidence="3">Optimum pH is 8.8.</text>
    </phDependence>
</comment>
<comment type="subunit">
    <text evidence="4">Monomer.</text>
</comment>
<comment type="interaction">
    <interactant intactId="EBI-2880280">
        <id>Q68CK6</id>
    </interactant>
    <interactant intactId="EBI-739552">
        <id>P43364</id>
        <label>MAGEA11</label>
    </interactant>
    <organismsDiffer>false</organismsDiffer>
    <experiments>3</experiments>
</comment>
<comment type="subcellular location">
    <subcellularLocation>
        <location evidence="3 4 5">Mitochondrion</location>
    </subcellularLocation>
</comment>
<comment type="tissue specificity">
    <text evidence="3 5">Detected in liver.</text>
</comment>
<comment type="similarity">
    <text evidence="7">Belongs to the ATP-dependent AMP-binding enzyme family.</text>
</comment>
<feature type="transit peptide" description="Mitochondrion" evidence="2">
    <location>
        <begin position="1"/>
        <end position="46"/>
    </location>
</feature>
<feature type="chain" id="PRO_0000306094" description="Acyl-coenzyme A synthetase ACSM2B, mitochondrial">
    <location>
        <begin position="47"/>
        <end position="577"/>
    </location>
</feature>
<feature type="binding site" evidence="1">
    <location>
        <position position="139"/>
    </location>
    <ligand>
        <name>CoA</name>
        <dbReference type="ChEBI" id="CHEBI:57287"/>
    </ligand>
</feature>
<feature type="binding site" evidence="1">
    <location>
        <begin position="221"/>
        <end position="229"/>
    </location>
    <ligand>
        <name>ATP</name>
        <dbReference type="ChEBI" id="CHEBI:30616"/>
    </ligand>
</feature>
<feature type="binding site" evidence="1">
    <location>
        <begin position="359"/>
        <end position="364"/>
    </location>
    <ligand>
        <name>ATP</name>
        <dbReference type="ChEBI" id="CHEBI:30616"/>
    </ligand>
</feature>
<feature type="binding site" evidence="1">
    <location>
        <position position="364"/>
    </location>
    <ligand>
        <name>substrate</name>
    </ligand>
</feature>
<feature type="binding site" evidence="1">
    <location>
        <position position="446"/>
    </location>
    <ligand>
        <name>ATP</name>
        <dbReference type="ChEBI" id="CHEBI:30616"/>
    </ligand>
</feature>
<feature type="binding site" evidence="1">
    <location>
        <position position="461"/>
    </location>
    <ligand>
        <name>ATP</name>
        <dbReference type="ChEBI" id="CHEBI:30616"/>
    </ligand>
</feature>
<feature type="binding site" evidence="1">
    <location>
        <begin position="469"/>
        <end position="471"/>
    </location>
    <ligand>
        <name>CoA</name>
        <dbReference type="ChEBI" id="CHEBI:57287"/>
    </ligand>
</feature>
<feature type="binding site" evidence="1">
    <location>
        <position position="472"/>
    </location>
    <ligand>
        <name>substrate</name>
    </ligand>
</feature>
<feature type="binding site" evidence="1">
    <location>
        <position position="501"/>
    </location>
    <ligand>
        <name>CoA</name>
        <dbReference type="ChEBI" id="CHEBI:57287"/>
    </ligand>
</feature>
<feature type="binding site" evidence="1">
    <location>
        <position position="532"/>
    </location>
    <ligand>
        <name>CoA</name>
        <dbReference type="ChEBI" id="CHEBI:57287"/>
    </ligand>
</feature>
<feature type="binding site" evidence="1">
    <location>
        <begin position="540"/>
        <end position="542"/>
    </location>
    <ligand>
        <name>CoA</name>
        <dbReference type="ChEBI" id="CHEBI:57287"/>
    </ligand>
</feature>
<feature type="binding site" evidence="1">
    <location>
        <position position="557"/>
    </location>
    <ligand>
        <name>ATP</name>
        <dbReference type="ChEBI" id="CHEBI:30616"/>
    </ligand>
</feature>
<feature type="modified residue" description="Phosphoserine" evidence="10">
    <location>
        <position position="513"/>
    </location>
</feature>
<feature type="sequence conflict" description="In Ref. 1; AAO17576." evidence="7" ref="1">
    <original>F</original>
    <variation>L</variation>
    <location>
        <position position="46"/>
    </location>
</feature>
<feature type="sequence conflict" description="In Ref. 1; AAO17576 and 2; BAD38642." evidence="7" ref="1 2">
    <original>I</original>
    <variation>V</variation>
    <location>
        <position position="96"/>
    </location>
</feature>
<feature type="sequence conflict" description="In Ref. 1; AAO17576." evidence="7" ref="1">
    <original>F</original>
    <variation>I</variation>
    <location>
        <position position="133"/>
    </location>
</feature>
<feature type="sequence conflict" description="In Ref. 1; AAO17576." evidence="7" ref="1">
    <original>G</original>
    <variation>E</variation>
    <location>
        <position position="136"/>
    </location>
</feature>
<feature type="sequence conflict" description="In Ref. 1; AAO17576." evidence="7" ref="1">
    <original>T</original>
    <variation>A</variation>
    <location>
        <position position="143"/>
    </location>
</feature>
<evidence type="ECO:0000250" key="1"/>
<evidence type="ECO:0000255" key="2"/>
<evidence type="ECO:0000269" key="3">
    <source>
    </source>
</evidence>
<evidence type="ECO:0000269" key="4">
    <source>
    </source>
</evidence>
<evidence type="ECO:0000269" key="5">
    <source>
    </source>
</evidence>
<evidence type="ECO:0000303" key="6">
    <source>
    </source>
</evidence>
<evidence type="ECO:0000305" key="7"/>
<evidence type="ECO:0000305" key="8">
    <source>
    </source>
</evidence>
<evidence type="ECO:0000305" key="9">
    <source>
    </source>
</evidence>
<evidence type="ECO:0007744" key="10">
    <source>
    </source>
</evidence>